<evidence type="ECO:0000250" key="1"/>
<evidence type="ECO:0000256" key="2">
    <source>
        <dbReference type="SAM" id="MobiDB-lite"/>
    </source>
</evidence>
<evidence type="ECO:0000305" key="3"/>
<feature type="initiator methionine" description="Removed" evidence="1">
    <location>
        <position position="1"/>
    </location>
</feature>
<feature type="chain" id="PRO_0000348217" description="Dymeclin">
    <location>
        <begin position="2"/>
        <end position="931"/>
    </location>
</feature>
<feature type="region of interest" description="Disordered" evidence="2">
    <location>
        <begin position="1"/>
        <end position="53"/>
    </location>
</feature>
<feature type="region of interest" description="Disordered" evidence="2">
    <location>
        <begin position="599"/>
        <end position="618"/>
    </location>
</feature>
<feature type="region of interest" description="Disordered" evidence="2">
    <location>
        <begin position="839"/>
        <end position="931"/>
    </location>
</feature>
<feature type="compositionally biased region" description="Low complexity" evidence="2">
    <location>
        <begin position="27"/>
        <end position="49"/>
    </location>
</feature>
<feature type="compositionally biased region" description="Low complexity" evidence="2">
    <location>
        <begin position="601"/>
        <end position="618"/>
    </location>
</feature>
<feature type="compositionally biased region" description="Polar residues" evidence="2">
    <location>
        <begin position="839"/>
        <end position="858"/>
    </location>
</feature>
<feature type="compositionally biased region" description="Low complexity" evidence="2">
    <location>
        <begin position="859"/>
        <end position="876"/>
    </location>
</feature>
<feature type="compositionally biased region" description="Low complexity" evidence="2">
    <location>
        <begin position="889"/>
        <end position="901"/>
    </location>
</feature>
<feature type="compositionally biased region" description="Polar residues" evidence="2">
    <location>
        <begin position="919"/>
        <end position="931"/>
    </location>
</feature>
<feature type="lipid moiety-binding region" description="N-myristoyl glycine" evidence="1">
    <location>
        <position position="2"/>
    </location>
</feature>
<name>DYM_DICDI</name>
<protein>
    <recommendedName>
        <fullName>Dymeclin</fullName>
    </recommendedName>
</protein>
<comment type="similarity">
    <text evidence="3">Belongs to the dymeclin family.</text>
</comment>
<reference key="1">
    <citation type="journal article" date="2005" name="Nature">
        <title>The genome of the social amoeba Dictyostelium discoideum.</title>
        <authorList>
            <person name="Eichinger L."/>
            <person name="Pachebat J.A."/>
            <person name="Gloeckner G."/>
            <person name="Rajandream M.A."/>
            <person name="Sucgang R."/>
            <person name="Berriman M."/>
            <person name="Song J."/>
            <person name="Olsen R."/>
            <person name="Szafranski K."/>
            <person name="Xu Q."/>
            <person name="Tunggal B."/>
            <person name="Kummerfeld S."/>
            <person name="Madera M."/>
            <person name="Konfortov B.A."/>
            <person name="Rivero F."/>
            <person name="Bankier A.T."/>
            <person name="Lehmann R."/>
            <person name="Hamlin N."/>
            <person name="Davies R."/>
            <person name="Gaudet P."/>
            <person name="Fey P."/>
            <person name="Pilcher K."/>
            <person name="Chen G."/>
            <person name="Saunders D."/>
            <person name="Sodergren E.J."/>
            <person name="Davis P."/>
            <person name="Kerhornou A."/>
            <person name="Nie X."/>
            <person name="Hall N."/>
            <person name="Anjard C."/>
            <person name="Hemphill L."/>
            <person name="Bason N."/>
            <person name="Farbrother P."/>
            <person name="Desany B."/>
            <person name="Just E."/>
            <person name="Morio T."/>
            <person name="Rost R."/>
            <person name="Churcher C.M."/>
            <person name="Cooper J."/>
            <person name="Haydock S."/>
            <person name="van Driessche N."/>
            <person name="Cronin A."/>
            <person name="Goodhead I."/>
            <person name="Muzny D.M."/>
            <person name="Mourier T."/>
            <person name="Pain A."/>
            <person name="Lu M."/>
            <person name="Harper D."/>
            <person name="Lindsay R."/>
            <person name="Hauser H."/>
            <person name="James K.D."/>
            <person name="Quiles M."/>
            <person name="Madan Babu M."/>
            <person name="Saito T."/>
            <person name="Buchrieser C."/>
            <person name="Wardroper A."/>
            <person name="Felder M."/>
            <person name="Thangavelu M."/>
            <person name="Johnson D."/>
            <person name="Knights A."/>
            <person name="Loulseged H."/>
            <person name="Mungall K.L."/>
            <person name="Oliver K."/>
            <person name="Price C."/>
            <person name="Quail M.A."/>
            <person name="Urushihara H."/>
            <person name="Hernandez J."/>
            <person name="Rabbinowitsch E."/>
            <person name="Steffen D."/>
            <person name="Sanders M."/>
            <person name="Ma J."/>
            <person name="Kohara Y."/>
            <person name="Sharp S."/>
            <person name="Simmonds M.N."/>
            <person name="Spiegler S."/>
            <person name="Tivey A."/>
            <person name="Sugano S."/>
            <person name="White B."/>
            <person name="Walker D."/>
            <person name="Woodward J.R."/>
            <person name="Winckler T."/>
            <person name="Tanaka Y."/>
            <person name="Shaulsky G."/>
            <person name="Schleicher M."/>
            <person name="Weinstock G.M."/>
            <person name="Rosenthal A."/>
            <person name="Cox E.C."/>
            <person name="Chisholm R.L."/>
            <person name="Gibbs R.A."/>
            <person name="Loomis W.F."/>
            <person name="Platzer M."/>
            <person name="Kay R.R."/>
            <person name="Williams J.G."/>
            <person name="Dear P.H."/>
            <person name="Noegel A.A."/>
            <person name="Barrell B.G."/>
            <person name="Kuspa A."/>
        </authorList>
    </citation>
    <scope>NUCLEOTIDE SEQUENCE [LARGE SCALE GENOMIC DNA]</scope>
    <source>
        <strain>AX4</strain>
    </source>
</reference>
<organism>
    <name type="scientific">Dictyostelium discoideum</name>
    <name type="common">Social amoeba</name>
    <dbReference type="NCBI Taxonomy" id="44689"/>
    <lineage>
        <taxon>Eukaryota</taxon>
        <taxon>Amoebozoa</taxon>
        <taxon>Evosea</taxon>
        <taxon>Eumycetozoa</taxon>
        <taxon>Dictyostelia</taxon>
        <taxon>Dictyosteliales</taxon>
        <taxon>Dictyosteliaceae</taxon>
        <taxon>Dictyostelium</taxon>
    </lineage>
</organism>
<dbReference type="EMBL" id="AAFI02000190">
    <property type="protein sequence ID" value="EDR41011.1"/>
    <property type="molecule type" value="Genomic_DNA"/>
</dbReference>
<dbReference type="RefSeq" id="XP_001733057.1">
    <property type="nucleotide sequence ID" value="XM_001733005.1"/>
</dbReference>
<dbReference type="FunCoup" id="B0G194">
    <property type="interactions" value="155"/>
</dbReference>
<dbReference type="STRING" id="44689.B0G194"/>
<dbReference type="PaxDb" id="44689-DDB0234070"/>
<dbReference type="EnsemblProtists" id="EDR41011">
    <property type="protein sequence ID" value="EDR41011"/>
    <property type="gene ID" value="DDB_G0292524"/>
</dbReference>
<dbReference type="GeneID" id="8628664"/>
<dbReference type="KEGG" id="ddi:DDB_G0292524"/>
<dbReference type="dictyBase" id="DDB_G0292524"/>
<dbReference type="VEuPathDB" id="AmoebaDB:DDB_G0292524"/>
<dbReference type="eggNOG" id="KOG2225">
    <property type="taxonomic scope" value="Eukaryota"/>
</dbReference>
<dbReference type="HOGENOM" id="CLU_314360_0_0_1"/>
<dbReference type="InParanoid" id="B0G194"/>
<dbReference type="OMA" id="NFVKRPR"/>
<dbReference type="PhylomeDB" id="B0G194"/>
<dbReference type="PRO" id="PR:B0G194"/>
<dbReference type="Proteomes" id="UP000002195">
    <property type="component" value="Chromosome 6"/>
</dbReference>
<dbReference type="GO" id="GO:0005794">
    <property type="term" value="C:Golgi apparatus"/>
    <property type="evidence" value="ECO:0000318"/>
    <property type="project" value="GO_Central"/>
</dbReference>
<dbReference type="GO" id="GO:0007030">
    <property type="term" value="P:Golgi organization"/>
    <property type="evidence" value="ECO:0000318"/>
    <property type="project" value="GO_Central"/>
</dbReference>
<dbReference type="InterPro" id="IPR019142">
    <property type="entry name" value="Dymeclin"/>
</dbReference>
<dbReference type="PANTHER" id="PTHR12895">
    <property type="entry name" value="DYMECLIN"/>
    <property type="match status" value="1"/>
</dbReference>
<dbReference type="PANTHER" id="PTHR12895:SF9">
    <property type="entry name" value="DYMECLIN"/>
    <property type="match status" value="1"/>
</dbReference>
<dbReference type="Pfam" id="PF09742">
    <property type="entry name" value="Dymeclin"/>
    <property type="match status" value="1"/>
</dbReference>
<accession>B0G194</accession>
<sequence>MGVASSNTAAGGVVPGENINNDETLSNNNKNNNNNNNNNNNNNNNNNNNSSTTTNLLVAADTAIANMASFYQSTLSDDFKLLASENQLPEDLDTFMETLLFSLNFSEESNHNYVYGLLNELSKQLVSNNLKTKNFNRILMHFINKLNLFNQQLITISESMKKNKGSKQQLILDQSVEIQLYTHQQFLVNYTILIQTFSKYIIENMDHVNIIQQFTGDSENSFKTIPFDLILSILGFLSNELRDCSYDLHDVLLRFILILFSTEMYLPLPTIQENYLTDTFTVDFSFYELLAPKTNIFLNILMDTVYNNPNSPIVYSFIFNLFNNIIENKPPPSTSNSLLDSIGSAASYLLLLPLNAYKYFFPQNNATGNSMTELSTFNLLVLVQYNYPKGNPFRKILSNIQDKDFSIDLLNSNPNNHQIRISMQQLYESIIKSPSSDKNILLLYYLLQENSFFFRYVQSRTDLDNLLLPMIQILYNSFEEKPQQVNMILIIILILSQDSLFNENVHSLIVHQILWYKERLLIDVSLGGILMVVLIKSIILNLSKLRDAHLHTNCLAILANLSSNISHIHPYVANRLVKLLEILSKRYIKLKKMLNQVDSPSKINTNNSNNNVKDNTNNITQSMSSVSISDDLSLDVNQLQQIKNLENHNSSINKHHNESHNNSSFLNSPDLNLKELQSEELTTHSEFLYIVLQIINNTLTYRAYSNPHLIYSLLHQQEYFPVFLNEENLSSLSNNILNILSYFSSELKHAINGLSQQETTAETIMSFIESKSKSLPVPPPDQEGILRFKYEEESTSFEFITPYVWSIIFNYSGEKWDTKNITLFPTVDLTTIKSPSVIDANNFTPKKQLSSDQLHSPPTNTTTTTTTTTNSTSSNTILNSMPIPPPNTQLQQQNNLRNQEQNQEENGDEKDDKIEKEQTTGVELSSTEKTN</sequence>
<proteinExistence type="inferred from homology"/>
<keyword id="KW-0449">Lipoprotein</keyword>
<keyword id="KW-0519">Myristate</keyword>
<keyword id="KW-1185">Reference proteome</keyword>
<gene>
    <name type="primary">dym</name>
    <name type="ORF">DDB_G0292524</name>
</gene>